<name>RYK_MOUSE</name>
<dbReference type="EC" id="2.7.10.1"/>
<dbReference type="EMBL" id="L02210">
    <property type="protein sequence ID" value="AAA40579.1"/>
    <property type="molecule type" value="mRNA"/>
</dbReference>
<dbReference type="EMBL" id="S53216">
    <property type="protein sequence ID" value="AAB25044.1"/>
    <property type="molecule type" value="mRNA"/>
</dbReference>
<dbReference type="EMBL" id="M98547">
    <property type="protein sequence ID" value="AAA40079.1"/>
    <property type="status" value="ALT_SEQ"/>
    <property type="molecule type" value="mRNA"/>
</dbReference>
<dbReference type="EMBL" id="L38394">
    <property type="protein sequence ID" value="AAA67060.1"/>
    <property type="molecule type" value="mRNA"/>
</dbReference>
<dbReference type="EMBL" id="L21707">
    <property type="protein sequence ID" value="AAA02913.1"/>
    <property type="molecule type" value="mRNA"/>
</dbReference>
<dbReference type="EMBL" id="BC006963">
    <property type="protein sequence ID" value="AAH06963.1"/>
    <property type="molecule type" value="mRNA"/>
</dbReference>
<dbReference type="CCDS" id="CCDS40747.1"/>
<dbReference type="PIR" id="A47186">
    <property type="entry name" value="A47186"/>
</dbReference>
<dbReference type="PIR" id="I56248">
    <property type="entry name" value="I56248"/>
</dbReference>
<dbReference type="PIR" id="I58386">
    <property type="entry name" value="I58386"/>
</dbReference>
<dbReference type="RefSeq" id="NP_001036072.1">
    <property type="nucleotide sequence ID" value="NM_001042607.1"/>
</dbReference>
<dbReference type="RefSeq" id="NP_038677.3">
    <property type="nucleotide sequence ID" value="NM_013649.3"/>
</dbReference>
<dbReference type="SMR" id="Q01887"/>
<dbReference type="BioGRID" id="203044">
    <property type="interactions" value="10"/>
</dbReference>
<dbReference type="CORUM" id="Q01887"/>
<dbReference type="DIP" id="DIP-61011N"/>
<dbReference type="FunCoup" id="Q01887">
    <property type="interactions" value="2345"/>
</dbReference>
<dbReference type="IntAct" id="Q01887">
    <property type="interactions" value="1"/>
</dbReference>
<dbReference type="STRING" id="10090.ENSMUSP00000135858"/>
<dbReference type="GlyCosmos" id="Q01887">
    <property type="glycosylation" value="5 sites, No reported glycans"/>
</dbReference>
<dbReference type="GlyGen" id="Q01887">
    <property type="glycosylation" value="5 sites, 1 N-linked glycan (1 site)"/>
</dbReference>
<dbReference type="iPTMnet" id="Q01887"/>
<dbReference type="PhosphoSitePlus" id="Q01887"/>
<dbReference type="PaxDb" id="10090-ENSMUSP00000135858"/>
<dbReference type="ProteomicsDB" id="260962"/>
<dbReference type="Antibodypedia" id="33387">
    <property type="antibodies" value="408 antibodies from 32 providers"/>
</dbReference>
<dbReference type="DNASU" id="20187"/>
<dbReference type="Ensembl" id="ENSMUST00000175883.8">
    <property type="protein sequence ID" value="ENSMUSP00000135858.2"/>
    <property type="gene ID" value="ENSMUSG00000032547.13"/>
</dbReference>
<dbReference type="GeneID" id="20187"/>
<dbReference type="KEGG" id="mmu:20187"/>
<dbReference type="UCSC" id="uc009rga.1">
    <property type="organism name" value="mouse"/>
</dbReference>
<dbReference type="AGR" id="MGI:101766"/>
<dbReference type="CTD" id="6259"/>
<dbReference type="MGI" id="MGI:101766">
    <property type="gene designation" value="Ryk"/>
</dbReference>
<dbReference type="VEuPathDB" id="HostDB:ENSMUSG00000032547"/>
<dbReference type="eggNOG" id="KOG1024">
    <property type="taxonomic scope" value="Eukaryota"/>
</dbReference>
<dbReference type="GeneTree" id="ENSGT00940000155119"/>
<dbReference type="InParanoid" id="Q01887"/>
<dbReference type="OMA" id="YCWAMSA"/>
<dbReference type="OrthoDB" id="4062651at2759"/>
<dbReference type="PhylomeDB" id="Q01887"/>
<dbReference type="TreeFam" id="TF317402"/>
<dbReference type="BRENDA" id="2.7.10.1">
    <property type="organism ID" value="3474"/>
</dbReference>
<dbReference type="Reactome" id="R-MMU-201681">
    <property type="pathway name" value="TCF dependent signaling in response to WNT"/>
</dbReference>
<dbReference type="BioGRID-ORCS" id="20187">
    <property type="hits" value="2 hits in 80 CRISPR screens"/>
</dbReference>
<dbReference type="ChiTaRS" id="Ryk">
    <property type="organism name" value="mouse"/>
</dbReference>
<dbReference type="PRO" id="PR:Q01887"/>
<dbReference type="Proteomes" id="UP000000589">
    <property type="component" value="Chromosome 9"/>
</dbReference>
<dbReference type="RNAct" id="Q01887">
    <property type="molecule type" value="protein"/>
</dbReference>
<dbReference type="Bgee" id="ENSMUSG00000032547">
    <property type="expression patterns" value="Expressed in metanephric loop of Henle and 279 other cell types or tissues"/>
</dbReference>
<dbReference type="ExpressionAtlas" id="Q01887">
    <property type="expression patterns" value="baseline and differential"/>
</dbReference>
<dbReference type="GO" id="GO:0005737">
    <property type="term" value="C:cytoplasm"/>
    <property type="evidence" value="ECO:0000314"/>
    <property type="project" value="UniProtKB"/>
</dbReference>
<dbReference type="GO" id="GO:0098978">
    <property type="term" value="C:glutamatergic synapse"/>
    <property type="evidence" value="ECO:0000314"/>
    <property type="project" value="SynGO"/>
</dbReference>
<dbReference type="GO" id="GO:0016020">
    <property type="term" value="C:membrane"/>
    <property type="evidence" value="ECO:0000314"/>
    <property type="project" value="UniProtKB"/>
</dbReference>
<dbReference type="GO" id="GO:0005634">
    <property type="term" value="C:nucleus"/>
    <property type="evidence" value="ECO:0000314"/>
    <property type="project" value="UniProtKB"/>
</dbReference>
<dbReference type="GO" id="GO:0005886">
    <property type="term" value="C:plasma membrane"/>
    <property type="evidence" value="ECO:0000314"/>
    <property type="project" value="MGI"/>
</dbReference>
<dbReference type="GO" id="GO:0098839">
    <property type="term" value="C:postsynaptic density membrane"/>
    <property type="evidence" value="ECO:0000314"/>
    <property type="project" value="SynGO"/>
</dbReference>
<dbReference type="GO" id="GO:0048787">
    <property type="term" value="C:presynaptic active zone membrane"/>
    <property type="evidence" value="ECO:0000314"/>
    <property type="project" value="SynGO"/>
</dbReference>
<dbReference type="GO" id="GO:0005524">
    <property type="term" value="F:ATP binding"/>
    <property type="evidence" value="ECO:0007669"/>
    <property type="project" value="UniProtKB-KW"/>
</dbReference>
<dbReference type="GO" id="GO:0005109">
    <property type="term" value="F:frizzled binding"/>
    <property type="evidence" value="ECO:0000353"/>
    <property type="project" value="UniProtKB"/>
</dbReference>
<dbReference type="GO" id="GO:0004672">
    <property type="term" value="F:protein kinase activity"/>
    <property type="evidence" value="ECO:0007669"/>
    <property type="project" value="InterPro"/>
</dbReference>
<dbReference type="GO" id="GO:0042813">
    <property type="term" value="F:Wnt receptor activity"/>
    <property type="evidence" value="ECO:0000353"/>
    <property type="project" value="MGI"/>
</dbReference>
<dbReference type="GO" id="GO:0017147">
    <property type="term" value="F:Wnt-protein binding"/>
    <property type="evidence" value="ECO:0000353"/>
    <property type="project" value="UniProtKB"/>
</dbReference>
<dbReference type="GO" id="GO:0048846">
    <property type="term" value="P:axon extension involved in axon guidance"/>
    <property type="evidence" value="ECO:0000316"/>
    <property type="project" value="MGI"/>
</dbReference>
<dbReference type="GO" id="GO:0007411">
    <property type="term" value="P:axon guidance"/>
    <property type="evidence" value="ECO:0000314"/>
    <property type="project" value="UniProtKB"/>
</dbReference>
<dbReference type="GO" id="GO:0007409">
    <property type="term" value="P:axonogenesis"/>
    <property type="evidence" value="ECO:0000316"/>
    <property type="project" value="MGI"/>
</dbReference>
<dbReference type="GO" id="GO:0061643">
    <property type="term" value="P:chemorepulsion of axon"/>
    <property type="evidence" value="ECO:0000304"/>
    <property type="project" value="ParkinsonsUK-UCL"/>
</dbReference>
<dbReference type="GO" id="GO:0036518">
    <property type="term" value="P:chemorepulsion of dopaminergic neuron axon"/>
    <property type="evidence" value="ECO:0000316"/>
    <property type="project" value="ParkinsonsUK-UCL"/>
</dbReference>
<dbReference type="GO" id="GO:0071679">
    <property type="term" value="P:commissural neuron axon guidance"/>
    <property type="evidence" value="ECO:0000315"/>
    <property type="project" value="MGI"/>
</dbReference>
<dbReference type="GO" id="GO:0022038">
    <property type="term" value="P:corpus callosum development"/>
    <property type="evidence" value="ECO:0000315"/>
    <property type="project" value="UniProtKB"/>
</dbReference>
<dbReference type="GO" id="GO:1904948">
    <property type="term" value="P:midbrain dopaminergic neuron differentiation"/>
    <property type="evidence" value="ECO:0000315"/>
    <property type="project" value="ParkinsonsUK-UCL"/>
</dbReference>
<dbReference type="GO" id="GO:0050919">
    <property type="term" value="P:negative chemotaxis"/>
    <property type="evidence" value="ECO:0000316"/>
    <property type="project" value="MGI"/>
</dbReference>
<dbReference type="GO" id="GO:0048843">
    <property type="term" value="P:negative regulation of axon extension involved in axon guidance"/>
    <property type="evidence" value="ECO:0000316"/>
    <property type="project" value="MGI"/>
</dbReference>
<dbReference type="GO" id="GO:0030182">
    <property type="term" value="P:neuron differentiation"/>
    <property type="evidence" value="ECO:0000314"/>
    <property type="project" value="UniProtKB"/>
</dbReference>
<dbReference type="GO" id="GO:0031175">
    <property type="term" value="P:neuron projection development"/>
    <property type="evidence" value="ECO:0000315"/>
    <property type="project" value="UniProtKB"/>
</dbReference>
<dbReference type="GO" id="GO:0043410">
    <property type="term" value="P:positive regulation of MAPK cascade"/>
    <property type="evidence" value="ECO:0000250"/>
    <property type="project" value="UniProtKB"/>
</dbReference>
<dbReference type="GO" id="GO:0048705">
    <property type="term" value="P:skeletal system morphogenesis"/>
    <property type="evidence" value="ECO:0000315"/>
    <property type="project" value="MGI"/>
</dbReference>
<dbReference type="GO" id="GO:0016055">
    <property type="term" value="P:Wnt signaling pathway"/>
    <property type="evidence" value="ECO:0000314"/>
    <property type="project" value="UniProtKB"/>
</dbReference>
<dbReference type="GO" id="GO:0060071">
    <property type="term" value="P:Wnt signaling pathway, planar cell polarity pathway"/>
    <property type="evidence" value="ECO:0000304"/>
    <property type="project" value="ARUK-UCL"/>
</dbReference>
<dbReference type="CDD" id="cd05043">
    <property type="entry name" value="PTK_Ryk"/>
    <property type="match status" value="1"/>
</dbReference>
<dbReference type="FunFam" id="1.10.510.10:FF:000165">
    <property type="entry name" value="Tyrosine-protein kinase RYK"/>
    <property type="match status" value="1"/>
</dbReference>
<dbReference type="FunFam" id="2.60.40.2170:FF:000002">
    <property type="entry name" value="Tyrosine-protein kinase RYK"/>
    <property type="match status" value="1"/>
</dbReference>
<dbReference type="FunFam" id="3.30.200.20:FF:000218">
    <property type="entry name" value="Tyrosine-protein kinase RYK"/>
    <property type="match status" value="1"/>
</dbReference>
<dbReference type="Gene3D" id="3.30.200.20">
    <property type="entry name" value="Phosphorylase Kinase, domain 1"/>
    <property type="match status" value="1"/>
</dbReference>
<dbReference type="Gene3D" id="1.10.510.10">
    <property type="entry name" value="Transferase(Phosphotransferase) domain 1"/>
    <property type="match status" value="1"/>
</dbReference>
<dbReference type="Gene3D" id="2.60.40.2170">
    <property type="entry name" value="Wnt, WIF domain"/>
    <property type="match status" value="1"/>
</dbReference>
<dbReference type="InterPro" id="IPR011009">
    <property type="entry name" value="Kinase-like_dom_sf"/>
</dbReference>
<dbReference type="InterPro" id="IPR000719">
    <property type="entry name" value="Prot_kinase_dom"/>
</dbReference>
<dbReference type="InterPro" id="IPR050122">
    <property type="entry name" value="RTK"/>
</dbReference>
<dbReference type="InterPro" id="IPR001245">
    <property type="entry name" value="Ser-Thr/Tyr_kinase_cat_dom"/>
</dbReference>
<dbReference type="InterPro" id="IPR008266">
    <property type="entry name" value="Tyr_kinase_AS"/>
</dbReference>
<dbReference type="InterPro" id="IPR020635">
    <property type="entry name" value="Tyr_kinase_cat_dom"/>
</dbReference>
<dbReference type="InterPro" id="IPR003306">
    <property type="entry name" value="WIF"/>
</dbReference>
<dbReference type="InterPro" id="IPR038677">
    <property type="entry name" value="WIF_sf"/>
</dbReference>
<dbReference type="PANTHER" id="PTHR24416">
    <property type="entry name" value="TYROSINE-PROTEIN KINASE RECEPTOR"/>
    <property type="match status" value="1"/>
</dbReference>
<dbReference type="PANTHER" id="PTHR24416:SF349">
    <property type="entry name" value="TYROSINE-PROTEIN KINASE RYK"/>
    <property type="match status" value="1"/>
</dbReference>
<dbReference type="Pfam" id="PF07714">
    <property type="entry name" value="PK_Tyr_Ser-Thr"/>
    <property type="match status" value="1"/>
</dbReference>
<dbReference type="Pfam" id="PF02019">
    <property type="entry name" value="WIF"/>
    <property type="match status" value="1"/>
</dbReference>
<dbReference type="PRINTS" id="PR00109">
    <property type="entry name" value="TYRKINASE"/>
</dbReference>
<dbReference type="SMART" id="SM00219">
    <property type="entry name" value="TyrKc"/>
    <property type="match status" value="1"/>
</dbReference>
<dbReference type="SMART" id="SM00469">
    <property type="entry name" value="WIF"/>
    <property type="match status" value="1"/>
</dbReference>
<dbReference type="SUPFAM" id="SSF56112">
    <property type="entry name" value="Protein kinase-like (PK-like)"/>
    <property type="match status" value="1"/>
</dbReference>
<dbReference type="PROSITE" id="PS50011">
    <property type="entry name" value="PROTEIN_KINASE_DOM"/>
    <property type="match status" value="1"/>
</dbReference>
<dbReference type="PROSITE" id="PS00109">
    <property type="entry name" value="PROTEIN_KINASE_TYR"/>
    <property type="match status" value="1"/>
</dbReference>
<dbReference type="PROSITE" id="PS50814">
    <property type="entry name" value="WIF"/>
    <property type="match status" value="1"/>
</dbReference>
<organism>
    <name type="scientific">Mus musculus</name>
    <name type="common">Mouse</name>
    <dbReference type="NCBI Taxonomy" id="10090"/>
    <lineage>
        <taxon>Eukaryota</taxon>
        <taxon>Metazoa</taxon>
        <taxon>Chordata</taxon>
        <taxon>Craniata</taxon>
        <taxon>Vertebrata</taxon>
        <taxon>Euteleostomi</taxon>
        <taxon>Mammalia</taxon>
        <taxon>Eutheria</taxon>
        <taxon>Euarchontoglires</taxon>
        <taxon>Glires</taxon>
        <taxon>Rodentia</taxon>
        <taxon>Myomorpha</taxon>
        <taxon>Muroidea</taxon>
        <taxon>Muridae</taxon>
        <taxon>Murinae</taxon>
        <taxon>Mus</taxon>
        <taxon>Mus</taxon>
    </lineage>
</organism>
<sequence length="594" mass="66285">MRAGRGGVPGSGGLRAPPPPLLLLLLAMLPAAAPRSPALAAAPAGPSVSLYLSEDEVRRLLGLDAELYYVRNDLISHYALSFNLLVPSETNFLHFTWHAKSKVEYKLGFQVDNFVAMGMPQVNISAQGEVPRTLSVFRVELSCTGKVDSEVMILMQLNLTVNSSKNFTVLNFKRRKMCYKKLEEVKTSALDKNTSRTIYDPVHAAPTTSTRVFYISVGVCCAVIFLVAIILAVLHLHSMKRIELDDSISASSSSQGLSQPSTQTTQYLRADTPNNATPITSSSGYPTLRIEKNDLRSVTLLEAKAKVKDIAISRERITLKDVLQEGTFGRIFHGILVDEKDPNKEKQTFVKTVKDQASEVQVTMMLTESCKLRGLHHRNLLPITHVCIEEGEKPMVVLPYMNWGNLKLFLRQCKLVEANNPQAISQQDLVHMAIQIACGMSYLARREVIHRDLAARNCVIDDTLQVKITDNALSRDLFPMDYHCLGDNENRPVRWMALESLVNNEFSSASDVWAFGVTLWELMTLGQTPYVDIDPFEMAAYLKDGYRIAQPINCPDELFAVMACCWALDPEERPKFQQLVQCLTEFHAALGAYV</sequence>
<accession>Q01887</accession>
<accession>Q61890</accession>
<feature type="signal peptide" evidence="2">
    <location>
        <begin position="1"/>
        <end position="34"/>
    </location>
</feature>
<feature type="chain" id="PRO_0000024465" description="Tyrosine-protein kinase RYK">
    <location>
        <begin position="35"/>
        <end position="594"/>
    </location>
</feature>
<feature type="topological domain" description="Extracellular" evidence="2">
    <location>
        <begin position="35"/>
        <end position="211"/>
    </location>
</feature>
<feature type="transmembrane region" description="Helical" evidence="2">
    <location>
        <begin position="212"/>
        <end position="239"/>
    </location>
</feature>
<feature type="topological domain" description="Cytoplasmic" evidence="2">
    <location>
        <begin position="240"/>
        <end position="594"/>
    </location>
</feature>
<feature type="domain" description="WIF" evidence="4">
    <location>
        <begin position="50"/>
        <end position="178"/>
    </location>
</feature>
<feature type="domain" description="Protein kinase" evidence="3">
    <location>
        <begin position="317"/>
        <end position="590"/>
    </location>
</feature>
<feature type="region of interest" description="Disordered" evidence="6">
    <location>
        <begin position="250"/>
        <end position="283"/>
    </location>
</feature>
<feature type="compositionally biased region" description="Low complexity" evidence="6">
    <location>
        <begin position="250"/>
        <end position="266"/>
    </location>
</feature>
<feature type="compositionally biased region" description="Polar residues" evidence="6">
    <location>
        <begin position="272"/>
        <end position="283"/>
    </location>
</feature>
<feature type="active site" description="Proton acceptor" evidence="3 5">
    <location>
        <position position="452"/>
    </location>
</feature>
<feature type="binding site" evidence="3">
    <location>
        <begin position="323"/>
        <end position="331"/>
    </location>
    <ligand>
        <name>ATP</name>
        <dbReference type="ChEBI" id="CHEBI:30616"/>
    </ligand>
</feature>
<feature type="binding site" evidence="3">
    <location>
        <position position="351"/>
    </location>
    <ligand>
        <name>ATP</name>
        <dbReference type="ChEBI" id="CHEBI:30616"/>
    </ligand>
</feature>
<feature type="modified residue" description="Phosphotyrosine; by autocatalysis" evidence="1">
    <location>
        <position position="482"/>
    </location>
</feature>
<feature type="glycosylation site" description="N-linked (GlcNAc...) asparagine" evidence="2">
    <location>
        <position position="123"/>
    </location>
</feature>
<feature type="glycosylation site" description="N-linked (GlcNAc...) asparagine" evidence="2">
    <location>
        <position position="158"/>
    </location>
</feature>
<feature type="glycosylation site" description="N-linked (GlcNAc...) asparagine" evidence="2">
    <location>
        <position position="162"/>
    </location>
</feature>
<feature type="glycosylation site" description="N-linked (GlcNAc...) asparagine" evidence="2">
    <location>
        <position position="166"/>
    </location>
</feature>
<feature type="glycosylation site" description="N-linked (GlcNAc...) asparagine" evidence="2">
    <location>
        <position position="193"/>
    </location>
</feature>
<feature type="sequence conflict" description="In Ref. 5; AAA02913." evidence="11" ref="5">
    <location>
        <position position="17"/>
    </location>
</feature>
<feature type="sequence conflict" description="In Ref. 3; AAA40079." evidence="11" ref="3">
    <original>P</original>
    <variation>A</variation>
    <location>
        <position position="20"/>
    </location>
</feature>
<feature type="sequence conflict" description="In Ref. 3; AAA40079." evidence="11" ref="3">
    <original>A</original>
    <variation>P</variation>
    <location>
        <position position="31"/>
    </location>
</feature>
<feature type="sequence conflict" description="In Ref. 3; AAA40079." evidence="11" ref="3">
    <original>RS</original>
    <variation>V</variation>
    <location>
        <begin position="35"/>
        <end position="36"/>
    </location>
</feature>
<feature type="sequence conflict" description="In Ref. 3; AAA40079." evidence="11" ref="3">
    <original>ALAA</original>
    <variation>GPGR</variation>
    <location>
        <begin position="38"/>
        <end position="41"/>
    </location>
</feature>
<feature type="sequence conflict" description="In Ref. 3; AAA40079." evidence="11" ref="3">
    <original>D</original>
    <variation>N</variation>
    <location>
        <position position="112"/>
    </location>
</feature>
<feature type="sequence conflict" description="In Ref. 3; AAA40079." evidence="11" ref="3">
    <original>V</original>
    <variation>G</variation>
    <location>
        <position position="130"/>
    </location>
</feature>
<feature type="sequence conflict" description="In Ref. 3; AAA40079." evidence="11" ref="3">
    <original>A</original>
    <variation>G</variation>
    <location>
        <position position="311"/>
    </location>
</feature>
<feature type="sequence conflict" description="In Ref. 5; AAA02913." evidence="11" ref="5">
    <original>RIT</original>
    <variation>GSH</variation>
    <location>
        <begin position="316"/>
        <end position="318"/>
    </location>
</feature>
<feature type="sequence conflict" description="In Ref. 3; AAA40079." evidence="11" ref="3">
    <original>T</original>
    <variation>S</variation>
    <location>
        <position position="327"/>
    </location>
</feature>
<feature type="sequence conflict" description="In Ref. 3; AAA40079." evidence="11" ref="3">
    <original>D</original>
    <variation>R</variation>
    <location>
        <position position="341"/>
    </location>
</feature>
<gene>
    <name type="primary">Ryk</name>
    <name type="synonym">Mrk</name>
</gene>
<protein>
    <recommendedName>
        <fullName>Tyrosine-protein kinase RYK</fullName>
        <ecNumber>2.7.10.1</ecNumber>
    </recommendedName>
    <alternativeName>
        <fullName>Kinase VIK</fullName>
    </alternativeName>
    <alternativeName>
        <fullName>Met-related kinase</fullName>
    </alternativeName>
    <alternativeName>
        <fullName>NYK-R</fullName>
    </alternativeName>
</protein>
<proteinExistence type="evidence at protein level"/>
<keyword id="KW-0067">ATP-binding</keyword>
<keyword id="KW-0963">Cytoplasm</keyword>
<keyword id="KW-0325">Glycoprotein</keyword>
<keyword id="KW-0418">Kinase</keyword>
<keyword id="KW-0472">Membrane</keyword>
<keyword id="KW-0547">Nucleotide-binding</keyword>
<keyword id="KW-0539">Nucleus</keyword>
<keyword id="KW-0597">Phosphoprotein</keyword>
<keyword id="KW-0675">Receptor</keyword>
<keyword id="KW-1185">Reference proteome</keyword>
<keyword id="KW-0732">Signal</keyword>
<keyword id="KW-0808">Transferase</keyword>
<keyword id="KW-0812">Transmembrane</keyword>
<keyword id="KW-1133">Transmembrane helix</keyword>
<keyword id="KW-0829">Tyrosine-protein kinase</keyword>
<keyword id="KW-0879">Wnt signaling pathway</keyword>
<evidence type="ECO:0000250" key="1"/>
<evidence type="ECO:0000255" key="2"/>
<evidence type="ECO:0000255" key="3">
    <source>
        <dbReference type="PROSITE-ProRule" id="PRU00159"/>
    </source>
</evidence>
<evidence type="ECO:0000255" key="4">
    <source>
        <dbReference type="PROSITE-ProRule" id="PRU00222"/>
    </source>
</evidence>
<evidence type="ECO:0000255" key="5">
    <source>
        <dbReference type="PROSITE-ProRule" id="PRU10028"/>
    </source>
</evidence>
<evidence type="ECO:0000256" key="6">
    <source>
        <dbReference type="SAM" id="MobiDB-lite"/>
    </source>
</evidence>
<evidence type="ECO:0000269" key="7">
    <source>
    </source>
</evidence>
<evidence type="ECO:0000269" key="8">
    <source>
    </source>
</evidence>
<evidence type="ECO:0000269" key="9">
    <source>
    </source>
</evidence>
<evidence type="ECO:0000269" key="10">
    <source>
    </source>
</evidence>
<evidence type="ECO:0000305" key="11"/>
<comment type="function">
    <text evidence="7 8 9 10">May be a coreceptor along with FZD8 of Wnt proteins, such as WNT1, WNT3, WNT3A and WNT5A. Involved in neuron differentiation, axon guidance, corpus callosum establishment and neurite outgrowth. In response to WNT3 stimulation, receptor C-terminal cleavage occurs in its transmembrane region and allows the C-terminal intracellular product to translocate from the cytoplasm to the nucleus where it plays a crucial role in neuronal development.</text>
</comment>
<comment type="catalytic activity">
    <reaction evidence="5">
        <text>L-tyrosyl-[protein] + ATP = O-phospho-L-tyrosyl-[protein] + ADP + H(+)</text>
        <dbReference type="Rhea" id="RHEA:10596"/>
        <dbReference type="Rhea" id="RHEA-COMP:10136"/>
        <dbReference type="Rhea" id="RHEA-COMP:20101"/>
        <dbReference type="ChEBI" id="CHEBI:15378"/>
        <dbReference type="ChEBI" id="CHEBI:30616"/>
        <dbReference type="ChEBI" id="CHEBI:46858"/>
        <dbReference type="ChEBI" id="CHEBI:61978"/>
        <dbReference type="ChEBI" id="CHEBI:456216"/>
        <dbReference type="EC" id="2.7.10.1"/>
    </reaction>
</comment>
<comment type="subunit">
    <text evidence="7">Interacts with DVL1 (via PDZ domain).</text>
</comment>
<comment type="interaction">
    <interactant intactId="EBI-16110594">
        <id>Q01887</id>
    </interactant>
    <interactant intactId="EBI-491549">
        <id>P35222</id>
        <label>CTNNB1</label>
    </interactant>
    <organismsDiffer>true</organismsDiffer>
    <experiments>2</experiments>
</comment>
<comment type="subcellular location">
    <subcellularLocation>
        <location evidence="10">Membrane</location>
        <topology evidence="10">Single-pass type I membrane protein</topology>
    </subcellularLocation>
    <subcellularLocation>
        <location evidence="10">Nucleus</location>
    </subcellularLocation>
    <subcellularLocation>
        <location evidence="10">Cytoplasm</location>
    </subcellularLocation>
    <text>In cells that have undergone neuronal differentiation, the C-terminal cleaved part is translocated from the cytoplasm to the nucleus.</text>
</comment>
<comment type="tissue specificity">
    <text>Is detected in all the tissues. Highest levels are seen in the ovary, lung and placenta.</text>
</comment>
<comment type="developmental stage">
    <text evidence="9 10">Highest expression at 16 dpc when callosal axons are beginning to cross the midline. At 17 dpc-18 dpc, when the majority of axons are projecting away from the midline, expression is observed but at a lower level. Present on the cell bodies of neurons in cortical layers at 18 dpc.</text>
</comment>
<comment type="domain">
    <text evidence="7">The extracellular WIF domain is responsible for Wnt binding.</text>
</comment>
<comment type="PTM">
    <text evidence="10">Proteolytically cleaved, in part by presenilin, in response to WNT3 stimulation.</text>
</comment>
<comment type="similarity">
    <text evidence="3">Belongs to the protein kinase superfamily. Tyr protein kinase family.</text>
</comment>
<comment type="sequence caution" evidence="11">
    <conflict type="erroneous initiation">
        <sequence resource="EMBL-CDS" id="AAA40079"/>
    </conflict>
    <text>Truncated N-terminus.</text>
</comment>
<comment type="sequence caution" evidence="11">
    <conflict type="frameshift">
        <sequence resource="EMBL-CDS" id="AAA40079"/>
    </conflict>
</comment>
<reference key="1">
    <citation type="journal article" date="1992" name="Int. J. Cell Cloning">
        <title>Molecular cloning of the cDNA encoding a receptor tyrosine kinase-related molecule with a catalytic region homologous to c-met.</title>
        <authorList>
            <person name="Paul S.R."/>
            <person name="Merberg D."/>
            <person name="Finnerty H."/>
            <person name="Morris G.E."/>
            <person name="Morris J.C."/>
            <person name="Jones S.S."/>
            <person name="Kriz R."/>
            <person name="Turner K.J."/>
            <person name="Wood C.R."/>
        </authorList>
    </citation>
    <scope>NUCLEOTIDE SEQUENCE [MRNA]</scope>
</reference>
<reference key="2">
    <citation type="journal article" date="1993" name="Oncogene">
        <title>The murine vik gene (chromosome 9) encodes a putative receptor with unique protein kinase motifs.</title>
        <authorList>
            <person name="Kelman Z."/>
            <person name="Simon-Chazottes D."/>
            <person name="Guenet J.-L."/>
            <person name="Yarden Y."/>
        </authorList>
    </citation>
    <scope>NUCLEOTIDE SEQUENCE [MRNA]</scope>
</reference>
<reference key="3">
    <citation type="journal article" date="1992" name="Proc. Natl. Acad. Sci. U.S.A.">
        <title>RYK, a receptor tyrosine kinase-related molecule with unusual kinase domain motifs.</title>
        <authorList>
            <person name="Hovens C.M."/>
            <person name="Stacker S.A."/>
            <person name="Andres A.-C."/>
            <person name="Harpur A.G."/>
            <person name="Ziemiecki A."/>
            <person name="Wilks A.F."/>
        </authorList>
    </citation>
    <scope>NUCLEOTIDE SEQUENCE [MRNA]</scope>
    <source>
        <strain>BALB/cJ</strain>
        <tissue>Peritoneal macrophage</tissue>
    </source>
</reference>
<reference key="4">
    <citation type="journal article" date="1995" name="J. Immunol.">
        <title>The receptor tyrosine kinase-related gene (ryk) demonstrates lineage and stage-specific expression in hematopoietic cells.</title>
        <authorList>
            <person name="Simoneaux D.K."/>
            <person name="Fletcher F.A."/>
            <person name="Jurecic R."/>
            <person name="Shilling H.G."/>
            <person name="Van N.T."/>
            <person name="Patel P."/>
            <person name="Belmont J.W."/>
        </authorList>
    </citation>
    <scope>NUCLEOTIDE SEQUENCE [MRNA]</scope>
</reference>
<reference key="5">
    <citation type="journal article" date="1993" name="Blood">
        <title>Isolation of a novel receptor tyrosine kinase cDNA expressed by developing erythroid progenitors.</title>
        <authorList>
            <person name="Yee K."/>
            <person name="Bishop T.R."/>
            <person name="Mather C."/>
            <person name="Zon L.I."/>
        </authorList>
    </citation>
    <scope>NUCLEOTIDE SEQUENCE [MRNA] OF 1-318</scope>
</reference>
<reference key="6">
    <citation type="journal article" date="2004" name="Genome Res.">
        <title>The status, quality, and expansion of the NIH full-length cDNA project: the Mammalian Gene Collection (MGC).</title>
        <authorList>
            <consortium name="The MGC Project Team"/>
        </authorList>
    </citation>
    <scope>NUCLEOTIDE SEQUENCE [LARGE SCALE MRNA] OF 190-594</scope>
    <source>
        <tissue>Mammary tumor</tissue>
    </source>
</reference>
<reference key="7">
    <citation type="journal article" date="2004" name="Cell">
        <title>Mammalian Ryk is a Wnt coreceptor required for stimulation of neurite outgrowth.</title>
        <authorList>
            <person name="Lu W."/>
            <person name="Yamamoto V."/>
            <person name="Ortega B."/>
            <person name="Baltimore D."/>
        </authorList>
    </citation>
    <scope>FUNCTION</scope>
    <scope>DOMAIN</scope>
    <scope>INTERACTION WITH DVL1</scope>
</reference>
<reference key="8">
    <citation type="journal article" date="2005" name="Nat. Neurosci.">
        <title>Ryk-mediated Wnt repulsion regulates posterior-directed growth of corticospinal tract.</title>
        <authorList>
            <person name="Liu Y."/>
            <person name="Shi J."/>
            <person name="Lu C.C."/>
            <person name="Wang Z.B."/>
            <person name="Lyuksyutova A.I."/>
            <person name="Song X.J."/>
            <person name="Zou Y."/>
        </authorList>
    </citation>
    <scope>FUNCTION</scope>
</reference>
<reference key="9">
    <citation type="journal article" date="2006" name="J. Neurosci.">
        <title>The Wnt receptor Ryk is required for Wnt5a-mediated axon guidance on the contralateral side of the corpus callosum.</title>
        <authorList>
            <person name="Keeble T.R."/>
            <person name="Halford M.M."/>
            <person name="Seaman C."/>
            <person name="Kee N."/>
            <person name="Macheda M."/>
            <person name="Anderson R.B."/>
            <person name="Stacker S.A."/>
            <person name="Cooper H.M."/>
        </authorList>
    </citation>
    <scope>FUNCTION</scope>
    <scope>DEVELOPMENTAL STAGE</scope>
</reference>
<reference key="10">
    <citation type="journal article" date="2008" name="Dev. Cell">
        <title>Cleavage of the Wnt receptor Ryk regulates neuronal differentiation during cortical neurogenesis.</title>
        <authorList>
            <person name="Lyu J."/>
            <person name="Yamamoto V."/>
            <person name="Lu W."/>
        </authorList>
    </citation>
    <scope>FUNCTION</scope>
    <scope>CLEAVAGE BY PRESENILIN</scope>
    <scope>SUBCELLULAR LOCATION</scope>
    <scope>DEVELOPMENTAL STAGE</scope>
</reference>